<evidence type="ECO:0000250" key="1">
    <source>
        <dbReference type="UniProtKB" id="Q9CTN5"/>
    </source>
</evidence>
<evidence type="ECO:0000256" key="2">
    <source>
        <dbReference type="SAM" id="MobiDB-lite"/>
    </source>
</evidence>
<evidence type="ECO:0000269" key="3">
    <source>
    </source>
</evidence>
<evidence type="ECO:0000269" key="4">
    <source>
    </source>
</evidence>
<evidence type="ECO:0000269" key="5">
    <source>
    </source>
</evidence>
<evidence type="ECO:0000269" key="6">
    <source>
    </source>
</evidence>
<evidence type="ECO:0000269" key="7">
    <source ref="3"/>
</evidence>
<evidence type="ECO:0000305" key="8"/>
<evidence type="ECO:0000312" key="9">
    <source>
        <dbReference type="HGNC" id="HGNC:19849"/>
    </source>
</evidence>
<reference key="1">
    <citation type="journal article" date="2004" name="Nat. Genet.">
        <title>Complete sequencing and characterization of 21,243 full-length human cDNAs.</title>
        <authorList>
            <person name="Ota T."/>
            <person name="Suzuki Y."/>
            <person name="Nishikawa T."/>
            <person name="Otsuki T."/>
            <person name="Sugiyama T."/>
            <person name="Irie R."/>
            <person name="Wakamatsu A."/>
            <person name="Hayashi K."/>
            <person name="Sato H."/>
            <person name="Nagai K."/>
            <person name="Kimura K."/>
            <person name="Makita H."/>
            <person name="Sekine M."/>
            <person name="Obayashi M."/>
            <person name="Nishi T."/>
            <person name="Shibahara T."/>
            <person name="Tanaka T."/>
            <person name="Ishii S."/>
            <person name="Yamamoto J."/>
            <person name="Saito K."/>
            <person name="Kawai Y."/>
            <person name="Isono Y."/>
            <person name="Nakamura Y."/>
            <person name="Nagahari K."/>
            <person name="Murakami K."/>
            <person name="Yasuda T."/>
            <person name="Iwayanagi T."/>
            <person name="Wagatsuma M."/>
            <person name="Shiratori A."/>
            <person name="Sudo H."/>
            <person name="Hosoiri T."/>
            <person name="Kaku Y."/>
            <person name="Kodaira H."/>
            <person name="Kondo H."/>
            <person name="Sugawara M."/>
            <person name="Takahashi M."/>
            <person name="Kanda K."/>
            <person name="Yokoi T."/>
            <person name="Furuya T."/>
            <person name="Kikkawa E."/>
            <person name="Omura Y."/>
            <person name="Abe K."/>
            <person name="Kamihara K."/>
            <person name="Katsuta N."/>
            <person name="Sato K."/>
            <person name="Tanikawa M."/>
            <person name="Yamazaki M."/>
            <person name="Ninomiya K."/>
            <person name="Ishibashi T."/>
            <person name="Yamashita H."/>
            <person name="Murakawa K."/>
            <person name="Fujimori K."/>
            <person name="Tanai H."/>
            <person name="Kimata M."/>
            <person name="Watanabe M."/>
            <person name="Hiraoka S."/>
            <person name="Chiba Y."/>
            <person name="Ishida S."/>
            <person name="Ono Y."/>
            <person name="Takiguchi S."/>
            <person name="Watanabe S."/>
            <person name="Yosida M."/>
            <person name="Hotuta T."/>
            <person name="Kusano J."/>
            <person name="Kanehori K."/>
            <person name="Takahashi-Fujii A."/>
            <person name="Hara H."/>
            <person name="Tanase T.-O."/>
            <person name="Nomura Y."/>
            <person name="Togiya S."/>
            <person name="Komai F."/>
            <person name="Hara R."/>
            <person name="Takeuchi K."/>
            <person name="Arita M."/>
            <person name="Imose N."/>
            <person name="Musashino K."/>
            <person name="Yuuki H."/>
            <person name="Oshima A."/>
            <person name="Sasaki N."/>
            <person name="Aotsuka S."/>
            <person name="Yoshikawa Y."/>
            <person name="Matsunawa H."/>
            <person name="Ichihara T."/>
            <person name="Shiohata N."/>
            <person name="Sano S."/>
            <person name="Moriya S."/>
            <person name="Momiyama H."/>
            <person name="Satoh N."/>
            <person name="Takami S."/>
            <person name="Terashima Y."/>
            <person name="Suzuki O."/>
            <person name="Nakagawa S."/>
            <person name="Senoh A."/>
            <person name="Mizoguchi H."/>
            <person name="Goto Y."/>
            <person name="Shimizu F."/>
            <person name="Wakebe H."/>
            <person name="Hishigaki H."/>
            <person name="Watanabe T."/>
            <person name="Sugiyama A."/>
            <person name="Takemoto M."/>
            <person name="Kawakami B."/>
            <person name="Yamazaki M."/>
            <person name="Watanabe K."/>
            <person name="Kumagai A."/>
            <person name="Itakura S."/>
            <person name="Fukuzumi Y."/>
            <person name="Fujimori Y."/>
            <person name="Komiyama M."/>
            <person name="Tashiro H."/>
            <person name="Tanigami A."/>
            <person name="Fujiwara T."/>
            <person name="Ono T."/>
            <person name="Yamada K."/>
            <person name="Fujii Y."/>
            <person name="Ozaki K."/>
            <person name="Hirao M."/>
            <person name="Ohmori Y."/>
            <person name="Kawabata A."/>
            <person name="Hikiji T."/>
            <person name="Kobatake N."/>
            <person name="Inagaki H."/>
            <person name="Ikema Y."/>
            <person name="Okamoto S."/>
            <person name="Okitani R."/>
            <person name="Kawakami T."/>
            <person name="Noguchi S."/>
            <person name="Itoh T."/>
            <person name="Shigeta K."/>
            <person name="Senba T."/>
            <person name="Matsumura K."/>
            <person name="Nakajima Y."/>
            <person name="Mizuno T."/>
            <person name="Morinaga M."/>
            <person name="Sasaki M."/>
            <person name="Togashi T."/>
            <person name="Oyama M."/>
            <person name="Hata H."/>
            <person name="Watanabe M."/>
            <person name="Komatsu T."/>
            <person name="Mizushima-Sugano J."/>
            <person name="Satoh T."/>
            <person name="Shirai Y."/>
            <person name="Takahashi Y."/>
            <person name="Nakagawa K."/>
            <person name="Okumura K."/>
            <person name="Nagase T."/>
            <person name="Nomura N."/>
            <person name="Kikuchi H."/>
            <person name="Masuho Y."/>
            <person name="Yamashita R."/>
            <person name="Nakai K."/>
            <person name="Yada T."/>
            <person name="Nakamura Y."/>
            <person name="Ohara O."/>
            <person name="Isogai T."/>
            <person name="Sugano S."/>
        </authorList>
    </citation>
    <scope>NUCLEOTIDE SEQUENCE [LARGE SCALE MRNA]</scope>
    <scope>VARIANT ILE-404</scope>
    <source>
        <tissue>Stomach cancer</tissue>
    </source>
</reference>
<reference key="2">
    <citation type="journal article" date="2003" name="Nature">
        <title>The DNA sequence and analysis of human chromosome 14.</title>
        <authorList>
            <person name="Heilig R."/>
            <person name="Eckenberg R."/>
            <person name="Petit J.-L."/>
            <person name="Fonknechten N."/>
            <person name="Da Silva C."/>
            <person name="Cattolico L."/>
            <person name="Levy M."/>
            <person name="Barbe V."/>
            <person name="De Berardinis V."/>
            <person name="Ureta-Vidal A."/>
            <person name="Pelletier E."/>
            <person name="Vico V."/>
            <person name="Anthouard V."/>
            <person name="Rowen L."/>
            <person name="Madan A."/>
            <person name="Qin S."/>
            <person name="Sun H."/>
            <person name="Du H."/>
            <person name="Pepin K."/>
            <person name="Artiguenave F."/>
            <person name="Robert C."/>
            <person name="Cruaud C."/>
            <person name="Bruels T."/>
            <person name="Jaillon O."/>
            <person name="Friedlander L."/>
            <person name="Samson G."/>
            <person name="Brottier P."/>
            <person name="Cure S."/>
            <person name="Segurens B."/>
            <person name="Aniere F."/>
            <person name="Samain S."/>
            <person name="Crespeau H."/>
            <person name="Abbasi N."/>
            <person name="Aiach N."/>
            <person name="Boscus D."/>
            <person name="Dickhoff R."/>
            <person name="Dors M."/>
            <person name="Dubois I."/>
            <person name="Friedman C."/>
            <person name="Gouyvenoux M."/>
            <person name="James R."/>
            <person name="Madan A."/>
            <person name="Mairey-Estrada B."/>
            <person name="Mangenot S."/>
            <person name="Martins N."/>
            <person name="Menard M."/>
            <person name="Oztas S."/>
            <person name="Ratcliffe A."/>
            <person name="Shaffer T."/>
            <person name="Trask B."/>
            <person name="Vacherie B."/>
            <person name="Bellemere C."/>
            <person name="Belser C."/>
            <person name="Besnard-Gonnet M."/>
            <person name="Bartol-Mavel D."/>
            <person name="Boutard M."/>
            <person name="Briez-Silla S."/>
            <person name="Combette S."/>
            <person name="Dufosse-Laurent V."/>
            <person name="Ferron C."/>
            <person name="Lechaplais C."/>
            <person name="Louesse C."/>
            <person name="Muselet D."/>
            <person name="Magdelenat G."/>
            <person name="Pateau E."/>
            <person name="Petit E."/>
            <person name="Sirvain-Trukniewicz P."/>
            <person name="Trybou A."/>
            <person name="Vega-Czarny N."/>
            <person name="Bataille E."/>
            <person name="Bluet E."/>
            <person name="Bordelais I."/>
            <person name="Dubois M."/>
            <person name="Dumont C."/>
            <person name="Guerin T."/>
            <person name="Haffray S."/>
            <person name="Hammadi R."/>
            <person name="Muanga J."/>
            <person name="Pellouin V."/>
            <person name="Robert D."/>
            <person name="Wunderle E."/>
            <person name="Gauguet G."/>
            <person name="Roy A."/>
            <person name="Sainte-Marthe L."/>
            <person name="Verdier J."/>
            <person name="Verdier-Discala C."/>
            <person name="Hillier L.W."/>
            <person name="Fulton L."/>
            <person name="McPherson J."/>
            <person name="Matsuda F."/>
            <person name="Wilson R."/>
            <person name="Scarpelli C."/>
            <person name="Gyapay G."/>
            <person name="Wincker P."/>
            <person name="Saurin W."/>
            <person name="Quetier F."/>
            <person name="Waterston R."/>
            <person name="Hood L."/>
            <person name="Weissenbach J."/>
        </authorList>
    </citation>
    <scope>NUCLEOTIDE SEQUENCE [LARGE SCALE GENOMIC DNA]</scope>
</reference>
<reference key="3">
    <citation type="submission" date="2005-07" db="EMBL/GenBank/DDBJ databases">
        <authorList>
            <person name="Mural R.J."/>
            <person name="Istrail S."/>
            <person name="Sutton G."/>
            <person name="Florea L."/>
            <person name="Halpern A.L."/>
            <person name="Mobarry C.M."/>
            <person name="Lippert R."/>
            <person name="Walenz B."/>
            <person name="Shatkay H."/>
            <person name="Dew I."/>
            <person name="Miller J.R."/>
            <person name="Flanigan M.J."/>
            <person name="Edwards N.J."/>
            <person name="Bolanos R."/>
            <person name="Fasulo D."/>
            <person name="Halldorsson B.V."/>
            <person name="Hannenhalli S."/>
            <person name="Turner R."/>
            <person name="Yooseph S."/>
            <person name="Lu F."/>
            <person name="Nusskern D.R."/>
            <person name="Shue B.C."/>
            <person name="Zheng X.H."/>
            <person name="Zhong F."/>
            <person name="Delcher A.L."/>
            <person name="Huson D.H."/>
            <person name="Kravitz S.A."/>
            <person name="Mouchard L."/>
            <person name="Reinert K."/>
            <person name="Remington K.A."/>
            <person name="Clark A.G."/>
            <person name="Waterman M.S."/>
            <person name="Eichler E.E."/>
            <person name="Adams M.D."/>
            <person name="Hunkapiller M.W."/>
            <person name="Myers E.W."/>
            <person name="Venter J.C."/>
        </authorList>
    </citation>
    <scope>NUCLEOTIDE SEQUENCE [LARGE SCALE GENOMIC DNA]</scope>
    <scope>VARIANT ILE-404</scope>
</reference>
<reference key="4">
    <citation type="journal article" date="2004" name="Genome Res.">
        <title>The status, quality, and expansion of the NIH full-length cDNA project: the Mammalian Gene Collection (MGC).</title>
        <authorList>
            <consortium name="The MGC Project Team"/>
        </authorList>
    </citation>
    <scope>NUCLEOTIDE SEQUENCE [LARGE SCALE MRNA]</scope>
    <scope>VARIANT ILE-404</scope>
</reference>
<reference key="5">
    <citation type="journal article" date="2005" name="Hum. Mol. Genet.">
        <title>Natural antisense transcripts associated with genes involved in eye development.</title>
        <authorList>
            <person name="Alfano G."/>
            <person name="Vitiello C."/>
            <person name="Caccioppoli C."/>
            <person name="Caramico T."/>
            <person name="Carola A."/>
            <person name="Szego M.J."/>
            <person name="McInnes R.R."/>
            <person name="Auricchio A."/>
            <person name="Banfi S."/>
        </authorList>
    </citation>
    <scope>IDENTIFICATION</scope>
    <scope>TISSUE SPECIFICITY</scope>
</reference>
<reference key="6">
    <citation type="journal article" date="2021" name="Am. J. Hum. Genet.">
        <title>Homozygous mutations in C14orf39/SIX6OS1 cause non-obstructive azoospermia and premature ovarian insufficiency in humans.</title>
        <authorList>
            <person name="Fan S."/>
            <person name="Jiao Y."/>
            <person name="Khan R."/>
            <person name="Jiang X."/>
            <person name="Javed A.R."/>
            <person name="Ali A."/>
            <person name="Zhang H."/>
            <person name="Zhou J."/>
            <person name="Naeem M."/>
            <person name="Murtaza G."/>
            <person name="Li Y."/>
            <person name="Yang G."/>
            <person name="Zaman Q."/>
            <person name="Zubair M."/>
            <person name="Guan H."/>
            <person name="Zhang X."/>
            <person name="Ma H."/>
            <person name="Jiang H."/>
            <person name="Ali H."/>
            <person name="Dil S."/>
            <person name="Shah W."/>
            <person name="Ahmad N."/>
            <person name="Zhang Y."/>
            <person name="Shi Q."/>
        </authorList>
    </citation>
    <scope>INVOLVEMENT IN SPGF52 AND POF18</scope>
    <scope>VARIANT SPGF52 320-GLU--PHE-587 DEL</scope>
    <scope>CHARACTERIZATION OF VARIANT SPGF52 320-GLU--PHE-587 DEL</scope>
    <scope>TISSUE SPECIFICITY</scope>
</reference>
<keyword id="KW-0158">Chromosome</keyword>
<keyword id="KW-0217">Developmental protein</keyword>
<keyword id="KW-0221">Differentiation</keyword>
<keyword id="KW-0225">Disease variant</keyword>
<keyword id="KW-0233">DNA recombination</keyword>
<keyword id="KW-0469">Meiosis</keyword>
<keyword id="KW-0597">Phosphoprotein</keyword>
<keyword id="KW-1066">Premature ovarian failure</keyword>
<keyword id="KW-1267">Proteomics identification</keyword>
<keyword id="KW-1185">Reference proteome</keyword>
<keyword id="KW-0744">Spermatogenesis</keyword>
<organism>
    <name type="scientific">Homo sapiens</name>
    <name type="common">Human</name>
    <dbReference type="NCBI Taxonomy" id="9606"/>
    <lineage>
        <taxon>Eukaryota</taxon>
        <taxon>Metazoa</taxon>
        <taxon>Chordata</taxon>
        <taxon>Craniata</taxon>
        <taxon>Vertebrata</taxon>
        <taxon>Euteleostomi</taxon>
        <taxon>Mammalia</taxon>
        <taxon>Eutheria</taxon>
        <taxon>Euarchontoglires</taxon>
        <taxon>Primates</taxon>
        <taxon>Haplorrhini</taxon>
        <taxon>Catarrhini</taxon>
        <taxon>Hominidae</taxon>
        <taxon>Homo</taxon>
    </lineage>
</organism>
<comment type="function">
    <text evidence="1">Meiotic protein that localizes to the central element of the synaptonemal complex and is required for chromosome synapsis during meiotic recombination. Required for the appropriate processing of intermediate recombination nodules before crossover formation.</text>
</comment>
<comment type="subunit">
    <text evidence="1">Interacts with SYCE1 (By similarity). Interacts with proteasome subunit PSMA8; to participate in meiosis progression during spermatogenesis (By similarity).</text>
</comment>
<comment type="interaction">
    <interactant intactId="EBI-12182077">
        <id>Q8N1H7</id>
    </interactant>
    <interactant intactId="EBI-10187349">
        <id>O60760</id>
        <label>HPGDS</label>
    </interactant>
    <organismsDiffer>false</organismsDiffer>
    <experiments>3</experiments>
</comment>
<comment type="interaction">
    <interactant intactId="EBI-12182077">
        <id>Q8N1H7</id>
    </interactant>
    <interactant intactId="EBI-11308402">
        <id>P80297</id>
        <label>MT1X</label>
    </interactant>
    <organismsDiffer>false</organismsDiffer>
    <experiments>3</experiments>
</comment>
<comment type="interaction">
    <interactant intactId="EBI-12182077">
        <id>Q8N1H7</id>
    </interactant>
    <interactant intactId="EBI-9370956">
        <id>Q15562-2</id>
        <label>TEAD2</label>
    </interactant>
    <organismsDiffer>false</organismsDiffer>
    <experiments>3</experiments>
</comment>
<comment type="interaction">
    <interactant intactId="EBI-12182077">
        <id>Q8N1H7</id>
    </interactant>
    <interactant intactId="EBI-720609">
        <id>O76024</id>
        <label>WFS1</label>
    </interactant>
    <organismsDiffer>false</organismsDiffer>
    <experiments>3</experiments>
</comment>
<comment type="subcellular location">
    <subcellularLocation>
        <location evidence="1">Chromosome</location>
    </subcellularLocation>
    <text evidence="1">Component of the central element of the synaptonemal complex. In spermatocytes, detected from zygonema to pachynema and localizes along synapsed lateral elements. Loading to the central element of the synaptonemal complex is dependent on the assembly of the tripartite synaptonemal complex structure that occurs upon synapsis between homologous chromosomes.</text>
</comment>
<comment type="tissue specificity">
    <text evidence="5 6">Highest expression in retina, skeletal muscle, testis and colon.</text>
</comment>
<comment type="disease" evidence="6">
    <disease id="DI-06021">
        <name>Spermatogenic failure 52</name>
        <acronym>SPGF52</acronym>
        <description>An autosomal recessive infertility disorder characterized by azoospermia due to meiotic arrest at the spermatocyte stage.</description>
        <dbReference type="MIM" id="619202"/>
    </disease>
    <text>The disease is caused by variants affecting the gene represented in this entry.</text>
</comment>
<comment type="disease" evidence="6">
    <disease id="DI-06020">
        <name>Premature ovarian failure 18</name>
        <acronym>POF18</acronym>
        <description>A form of premature ovarian failure, an ovarian disorder defined as the cessation of ovarian function under the age of 40 years. It is characterized by oligomenorrhea or amenorrhea, in the presence of elevated levels of serum gonadotropins and low estradiol. POF18 is an autosomal recessive form characterized by irregular menstrual cycles and cessation of menstruation in the third decade of life. The uterus is small, ovaries may be small or rudimentary, and do not show follicular activity.</description>
        <dbReference type="MIM" id="619203"/>
    </disease>
    <text>The disease is caused by variants affecting the gene represented in this entry.</text>
</comment>
<gene>
    <name evidence="9" type="primary">SIX6OS1</name>
    <name type="synonym">C14orf39</name>
</gene>
<dbReference type="EMBL" id="AK098187">
    <property type="protein sequence ID" value="BAC05253.1"/>
    <property type="molecule type" value="mRNA"/>
</dbReference>
<dbReference type="EMBL" id="AL132778">
    <property type="status" value="NOT_ANNOTATED_CDS"/>
    <property type="molecule type" value="Genomic_DNA"/>
</dbReference>
<dbReference type="EMBL" id="CH471061">
    <property type="protein sequence ID" value="EAW80781.1"/>
    <property type="molecule type" value="Genomic_DNA"/>
</dbReference>
<dbReference type="EMBL" id="BC125070">
    <property type="protein sequence ID" value="AAI25071.1"/>
    <property type="molecule type" value="mRNA"/>
</dbReference>
<dbReference type="CCDS" id="CCDS9746.1"/>
<dbReference type="RefSeq" id="NP_777638.2">
    <property type="nucleotide sequence ID" value="NM_174978.2"/>
</dbReference>
<dbReference type="SMR" id="Q8N1H7"/>
<dbReference type="BioGRID" id="130462">
    <property type="interactions" value="6"/>
</dbReference>
<dbReference type="FunCoup" id="Q8N1H7">
    <property type="interactions" value="9"/>
</dbReference>
<dbReference type="IntAct" id="Q8N1H7">
    <property type="interactions" value="5"/>
</dbReference>
<dbReference type="STRING" id="9606.ENSP00000324920"/>
<dbReference type="GlyGen" id="Q8N1H7">
    <property type="glycosylation" value="1 site, 1 O-linked glycan (1 site)"/>
</dbReference>
<dbReference type="iPTMnet" id="Q8N1H7"/>
<dbReference type="PhosphoSitePlus" id="Q8N1H7"/>
<dbReference type="BioMuta" id="C14orf39"/>
<dbReference type="DMDM" id="296452892"/>
<dbReference type="MassIVE" id="Q8N1H7"/>
<dbReference type="PaxDb" id="9606-ENSP00000324920"/>
<dbReference type="PeptideAtlas" id="Q8N1H7"/>
<dbReference type="ProteomicsDB" id="71602"/>
<dbReference type="Antibodypedia" id="66081">
    <property type="antibodies" value="14 antibodies from 11 providers"/>
</dbReference>
<dbReference type="DNASU" id="317761"/>
<dbReference type="Ensembl" id="ENST00000321731.8">
    <property type="protein sequence ID" value="ENSP00000324920.3"/>
    <property type="gene ID" value="ENSG00000179008.9"/>
</dbReference>
<dbReference type="GeneID" id="317761"/>
<dbReference type="KEGG" id="hsa:317761"/>
<dbReference type="MANE-Select" id="ENST00000321731.8">
    <property type="protein sequence ID" value="ENSP00000324920.3"/>
    <property type="RefSeq nucleotide sequence ID" value="NM_174978.3"/>
    <property type="RefSeq protein sequence ID" value="NP_777638.3"/>
</dbReference>
<dbReference type="UCSC" id="uc001xez.5">
    <property type="organism name" value="human"/>
</dbReference>
<dbReference type="AGR" id="HGNC:19849"/>
<dbReference type="CTD" id="317761"/>
<dbReference type="DisGeNET" id="317761"/>
<dbReference type="GeneCards" id="C14orf39"/>
<dbReference type="HGNC" id="HGNC:19849">
    <property type="gene designation" value="C14orf39"/>
</dbReference>
<dbReference type="HPA" id="ENSG00000179008">
    <property type="expression patterns" value="Tissue enhanced (pituitary gland, salivary gland, testis)"/>
</dbReference>
<dbReference type="MalaCards" id="C14orf39"/>
<dbReference type="MIM" id="617307">
    <property type="type" value="gene"/>
</dbReference>
<dbReference type="MIM" id="619202">
    <property type="type" value="phenotype"/>
</dbReference>
<dbReference type="MIM" id="619203">
    <property type="type" value="phenotype"/>
</dbReference>
<dbReference type="neXtProt" id="NX_Q8N1H7"/>
<dbReference type="OpenTargets" id="ENSG00000179008"/>
<dbReference type="Orphanet" id="399805">
    <property type="disease" value="Male infertility with azoospermia or oligozoospermia due to single gene mutation"/>
</dbReference>
<dbReference type="PharmGKB" id="PA134950036"/>
<dbReference type="VEuPathDB" id="HostDB:ENSG00000179008"/>
<dbReference type="eggNOG" id="ENOG502QQ3A">
    <property type="taxonomic scope" value="Eukaryota"/>
</dbReference>
<dbReference type="GeneTree" id="ENSGT00390000010439"/>
<dbReference type="HOGENOM" id="CLU_466138_0_0_1"/>
<dbReference type="InParanoid" id="Q8N1H7"/>
<dbReference type="OMA" id="TKWTLNI"/>
<dbReference type="OrthoDB" id="8961345at2759"/>
<dbReference type="PAN-GO" id="Q8N1H7">
    <property type="GO annotations" value="5 GO annotations based on evolutionary models"/>
</dbReference>
<dbReference type="PhylomeDB" id="Q8N1H7"/>
<dbReference type="TreeFam" id="TF337593"/>
<dbReference type="PathwayCommons" id="Q8N1H7"/>
<dbReference type="SignaLink" id="Q8N1H7"/>
<dbReference type="BioGRID-ORCS" id="317761">
    <property type="hits" value="22 hits in 1114 CRISPR screens"/>
</dbReference>
<dbReference type="ChiTaRS" id="C14orf39">
    <property type="organism name" value="human"/>
</dbReference>
<dbReference type="GenomeRNAi" id="317761"/>
<dbReference type="Pharos" id="Q8N1H7">
    <property type="development level" value="Tdark"/>
</dbReference>
<dbReference type="PRO" id="PR:Q8N1H7"/>
<dbReference type="Proteomes" id="UP000005640">
    <property type="component" value="Chromosome 14"/>
</dbReference>
<dbReference type="RNAct" id="Q8N1H7">
    <property type="molecule type" value="protein"/>
</dbReference>
<dbReference type="Bgee" id="ENSG00000179008">
    <property type="expression patterns" value="Expressed in primordial germ cell in gonad and 90 other cell types or tissues"/>
</dbReference>
<dbReference type="ExpressionAtlas" id="Q8N1H7">
    <property type="expression patterns" value="baseline and differential"/>
</dbReference>
<dbReference type="GO" id="GO:0000801">
    <property type="term" value="C:central element"/>
    <property type="evidence" value="ECO:0000250"/>
    <property type="project" value="UniProtKB"/>
</dbReference>
<dbReference type="GO" id="GO:0005694">
    <property type="term" value="C:chromosome"/>
    <property type="evidence" value="ECO:0000250"/>
    <property type="project" value="UniProtKB"/>
</dbReference>
<dbReference type="GO" id="GO:0007129">
    <property type="term" value="P:homologous chromosome pairing at meiosis"/>
    <property type="evidence" value="ECO:0000315"/>
    <property type="project" value="UniProtKB"/>
</dbReference>
<dbReference type="GO" id="GO:0010705">
    <property type="term" value="P:meiotic DNA double-strand break processing involved in reciprocal meiotic recombination"/>
    <property type="evidence" value="ECO:0000250"/>
    <property type="project" value="UniProtKB"/>
</dbReference>
<dbReference type="GO" id="GO:0048477">
    <property type="term" value="P:oogenesis"/>
    <property type="evidence" value="ECO:0000250"/>
    <property type="project" value="UniProtKB"/>
</dbReference>
<dbReference type="GO" id="GO:0051090">
    <property type="term" value="P:regulation of DNA-binding transcription factor activity"/>
    <property type="evidence" value="ECO:0000303"/>
    <property type="project" value="UniProtKB"/>
</dbReference>
<dbReference type="GO" id="GO:0007283">
    <property type="term" value="P:spermatogenesis"/>
    <property type="evidence" value="ECO:0000250"/>
    <property type="project" value="UniProtKB"/>
</dbReference>
<dbReference type="GO" id="GO:0007130">
    <property type="term" value="P:synaptonemal complex assembly"/>
    <property type="evidence" value="ECO:0007669"/>
    <property type="project" value="Ensembl"/>
</dbReference>
<dbReference type="InterPro" id="IPR031380">
    <property type="entry name" value="SIX6OS1"/>
</dbReference>
<dbReference type="PANTHER" id="PTHR35449">
    <property type="entry name" value="PROTEIN SIX6OS1"/>
    <property type="match status" value="1"/>
</dbReference>
<dbReference type="PANTHER" id="PTHR35449:SF1">
    <property type="entry name" value="PROTEIN SIX6OS1"/>
    <property type="match status" value="1"/>
</dbReference>
<dbReference type="Pfam" id="PF15676">
    <property type="entry name" value="S6OS1"/>
    <property type="match status" value="1"/>
</dbReference>
<sequence length="587" mass="68166">MNDSLFVSLDRLLLEFVFQYEQDISTKEEMIQRINKCCEDIKENKVTICRIHETINATDEEIDHYCKHSEEIKDNCRNWKPTCDVFRKHEDYMQDQFTVYQGTVEKDKEMYHDYICQYKEVLKQYQLKYSETPFSREYYEKKREHEEIQSRVLACTEQLKMNETIFMKFRVPAPFPSLTKWTLNIVNLRCETQDILKHASNLTKSSSELKKEVDEMEIEINYLNQQISRHNETKALSETLEEKNKNTENRKELKERIFGKDEHVLTLNKTQSSQLFLPYESQKLVRPIKMHSSEPRVADIKEESSAKQSKLANIDFRQKENDTQIFNDSAVDNHSKCSHITTITSSQKFMQVRLLTPQKQSNSNQWSEKGDKDAEYGDKGTVRQVRESKCTSQAIYTEHFGKSVENDSDEVEERAENFPRTSEIPIFLGTPKAVKAPESLEKIKFPKTPPFEINRNRNAVPEVQTEKESPGLSFLMSYTSRSPGLNLFDSSVFDTEISSDQFNEHYSARNLNPLSSEQEIGNLLEKPEGEDGFTFSFPSDTSTHTFGAGKDDFSFPFSFGQGQNSIPSSSLKGFSSSSQNTTQFTFF</sequence>
<feature type="chain" id="PRO_0000089888" description="Protein SIX6OS1">
    <location>
        <begin position="1"/>
        <end position="587"/>
    </location>
</feature>
<feature type="region of interest" description="Disordered" evidence="2">
    <location>
        <begin position="356"/>
        <end position="378"/>
    </location>
</feature>
<feature type="region of interest" description="Disordered" evidence="2">
    <location>
        <begin position="568"/>
        <end position="587"/>
    </location>
</feature>
<feature type="compositionally biased region" description="Polar residues" evidence="2">
    <location>
        <begin position="357"/>
        <end position="367"/>
    </location>
</feature>
<feature type="compositionally biased region" description="Basic and acidic residues" evidence="2">
    <location>
        <begin position="368"/>
        <end position="378"/>
    </location>
</feature>
<feature type="modified residue" description="Phosphoserine" evidence="1">
    <location>
        <position position="439"/>
    </location>
</feature>
<feature type="sequence variant" id="VAR_056983" description="In dbSNP:rs1956551.">
    <original>Y</original>
    <variation>C</variation>
    <location>
        <position position="125"/>
    </location>
</feature>
<feature type="sequence variant" id="VAR_056984" description="In dbSNP:rs1033734.">
    <original>S</original>
    <variation>L</variation>
    <location>
        <position position="309"/>
    </location>
</feature>
<feature type="sequence variant" id="VAR_085225" description="In SPGF52; does not affect protein expression; impairs polycomplex formation between SIX6OS1 and SYCE1." evidence="6">
    <location>
        <begin position="320"/>
        <end position="587"/>
    </location>
</feature>
<feature type="sequence variant" id="VAR_059715" description="In dbSNP:rs11625921." evidence="3 4 7">
    <original>V</original>
    <variation>I</variation>
    <location>
        <position position="404"/>
    </location>
</feature>
<feature type="sequence conflict" description="In Ref. 1; BAC05253." evidence="8" ref="1">
    <original>A</original>
    <variation>V</variation>
    <location>
        <position position="306"/>
    </location>
</feature>
<feature type="sequence conflict" description="In Ref. 1; BAC05253." evidence="8" ref="1">
    <original>L</original>
    <variation>F</variation>
    <location>
        <position position="524"/>
    </location>
</feature>
<name>S6OS1_HUMAN</name>
<accession>Q8N1H7</accession>
<accession>Q08AQ4</accession>
<protein>
    <recommendedName>
        <fullName>Protein SIX6OS1</fullName>
    </recommendedName>
    <alternativeName>
        <fullName evidence="9">Six6 opposite strand transcript 1</fullName>
    </alternativeName>
</protein>
<proteinExistence type="evidence at protein level"/>